<accession>P82645</accession>
<name>DF235_ARATH</name>
<dbReference type="EMBL" id="AL022140">
    <property type="status" value="NOT_ANNOTATED_CDS"/>
    <property type="molecule type" value="Genomic_DNA"/>
</dbReference>
<dbReference type="EMBL" id="AL161556">
    <property type="status" value="NOT_ANNOTATED_CDS"/>
    <property type="molecule type" value="Genomic_DNA"/>
</dbReference>
<dbReference type="EMBL" id="CP002687">
    <property type="protein sequence ID" value="AEE84550.1"/>
    <property type="molecule type" value="Genomic_DNA"/>
</dbReference>
<dbReference type="RefSeq" id="NP_001031693.1">
    <property type="nucleotide sequence ID" value="NM_001036616.2"/>
</dbReference>
<dbReference type="SMR" id="P82645"/>
<dbReference type="STRING" id="3702.P82645"/>
<dbReference type="PaxDb" id="3702-AT4G22105.1"/>
<dbReference type="ProteomicsDB" id="224263"/>
<dbReference type="EnsemblPlants" id="AT4G22105.1">
    <property type="protein sequence ID" value="AT4G22105.1"/>
    <property type="gene ID" value="AT4G22105"/>
</dbReference>
<dbReference type="GeneID" id="3769849"/>
<dbReference type="Gramene" id="AT4G22105.1">
    <property type="protein sequence ID" value="AT4G22105.1"/>
    <property type="gene ID" value="AT4G22105"/>
</dbReference>
<dbReference type="KEGG" id="ath:AT4G22105"/>
<dbReference type="Araport" id="AT4G22105"/>
<dbReference type="TAIR" id="AT4G22105">
    <property type="gene designation" value="SCRL26"/>
</dbReference>
<dbReference type="HOGENOM" id="CLU_174283_0_0_1"/>
<dbReference type="InParanoid" id="P82645"/>
<dbReference type="OMA" id="GGVMNKP"/>
<dbReference type="OrthoDB" id="1021055at2759"/>
<dbReference type="PhylomeDB" id="P82645"/>
<dbReference type="PRO" id="PR:P82645"/>
<dbReference type="Proteomes" id="UP000006548">
    <property type="component" value="Chromosome 4"/>
</dbReference>
<dbReference type="ExpressionAtlas" id="P82645">
    <property type="expression patterns" value="baseline and differential"/>
</dbReference>
<dbReference type="GO" id="GO:0005576">
    <property type="term" value="C:extracellular region"/>
    <property type="evidence" value="ECO:0007669"/>
    <property type="project" value="UniProtKB-SubCell"/>
</dbReference>
<dbReference type="GO" id="GO:0050832">
    <property type="term" value="P:defense response to fungus"/>
    <property type="evidence" value="ECO:0007669"/>
    <property type="project" value="UniProtKB-KW"/>
</dbReference>
<dbReference type="GO" id="GO:0031640">
    <property type="term" value="P:killing of cells of another organism"/>
    <property type="evidence" value="ECO:0007669"/>
    <property type="project" value="UniProtKB-KW"/>
</dbReference>
<dbReference type="GO" id="GO:0007165">
    <property type="term" value="P:signal transduction"/>
    <property type="evidence" value="ECO:0007669"/>
    <property type="project" value="InterPro"/>
</dbReference>
<dbReference type="InterPro" id="IPR010682">
    <property type="entry name" value="SCRL"/>
</dbReference>
<dbReference type="PANTHER" id="PTHR34450:SF5">
    <property type="entry name" value="DEFENSIN-LIKE PROTEIN 229-RELATED"/>
    <property type="match status" value="1"/>
</dbReference>
<dbReference type="PANTHER" id="PTHR34450">
    <property type="entry name" value="DEFENSIN-LIKE PROTEIN 245-RELATED"/>
    <property type="match status" value="1"/>
</dbReference>
<dbReference type="Pfam" id="PF06876">
    <property type="entry name" value="SCRL"/>
    <property type="match status" value="1"/>
</dbReference>
<comment type="subcellular location">
    <subcellularLocation>
        <location evidence="1">Secreted</location>
    </subcellularLocation>
</comment>
<comment type="similarity">
    <text evidence="3">Belongs to the DEFL family.</text>
</comment>
<comment type="caution">
    <text evidence="3">Lacks 1 of the 4 disulfide bonds, which are conserved features of the family.</text>
</comment>
<evidence type="ECO:0000250" key="1"/>
<evidence type="ECO:0000255" key="2"/>
<evidence type="ECO:0000305" key="3"/>
<protein>
    <recommendedName>
        <fullName>Putative defensin-like protein 235</fullName>
    </recommendedName>
    <alternativeName>
        <fullName>Putative S locus cysteine-rich-like protein 26</fullName>
        <shortName>Protein SCRL26</shortName>
        <shortName>SCR-like protein 26</shortName>
    </alternativeName>
</protein>
<sequence>MRSATFFLVSCVLMSFVLSHVKEVEAGLDPMAANLRVRKDIFIGGCGRDGNKTCMKDFVKKGGVMNKPISCECDNLGYEHLCRCNFS</sequence>
<proteinExistence type="inferred from homology"/>
<feature type="signal peptide" evidence="2">
    <location>
        <begin position="1"/>
        <end position="26"/>
    </location>
</feature>
<feature type="chain" id="PRO_0000031952" description="Putative defensin-like protein 235">
    <location>
        <begin position="27"/>
        <end position="87"/>
    </location>
</feature>
<feature type="disulfide bond" evidence="1">
    <location>
        <begin position="46"/>
        <end position="73"/>
    </location>
</feature>
<feature type="disulfide bond" evidence="1">
    <location>
        <begin position="54"/>
        <end position="82"/>
    </location>
</feature>
<feature type="disulfide bond" evidence="1">
    <location>
        <begin position="71"/>
        <end position="84"/>
    </location>
</feature>
<keyword id="KW-0929">Antimicrobial</keyword>
<keyword id="KW-1015">Disulfide bond</keyword>
<keyword id="KW-0295">Fungicide</keyword>
<keyword id="KW-0611">Plant defense</keyword>
<keyword id="KW-1185">Reference proteome</keyword>
<keyword id="KW-0964">Secreted</keyword>
<keyword id="KW-0732">Signal</keyword>
<gene>
    <name type="primary">SCRL26</name>
    <name type="ordered locus">At4g22105</name>
    <name type="ORF">F1N20</name>
</gene>
<reference evidence="3" key="1">
    <citation type="journal article" date="1999" name="Nature">
        <title>Sequence and analysis of chromosome 4 of the plant Arabidopsis thaliana.</title>
        <authorList>
            <person name="Mayer K.F.X."/>
            <person name="Schueller C."/>
            <person name="Wambutt R."/>
            <person name="Murphy G."/>
            <person name="Volckaert G."/>
            <person name="Pohl T."/>
            <person name="Duesterhoeft A."/>
            <person name="Stiekema W."/>
            <person name="Entian K.-D."/>
            <person name="Terryn N."/>
            <person name="Harris B."/>
            <person name="Ansorge W."/>
            <person name="Brandt P."/>
            <person name="Grivell L.A."/>
            <person name="Rieger M."/>
            <person name="Weichselgartner M."/>
            <person name="de Simone V."/>
            <person name="Obermaier B."/>
            <person name="Mache R."/>
            <person name="Mueller M."/>
            <person name="Kreis M."/>
            <person name="Delseny M."/>
            <person name="Puigdomenech P."/>
            <person name="Watson M."/>
            <person name="Schmidtheini T."/>
            <person name="Reichert B."/>
            <person name="Portetelle D."/>
            <person name="Perez-Alonso M."/>
            <person name="Boutry M."/>
            <person name="Bancroft I."/>
            <person name="Vos P."/>
            <person name="Hoheisel J."/>
            <person name="Zimmermann W."/>
            <person name="Wedler H."/>
            <person name="Ridley P."/>
            <person name="Langham S.-A."/>
            <person name="McCullagh B."/>
            <person name="Bilham L."/>
            <person name="Robben J."/>
            <person name="van der Schueren J."/>
            <person name="Grymonprez B."/>
            <person name="Chuang Y.-J."/>
            <person name="Vandenbussche F."/>
            <person name="Braeken M."/>
            <person name="Weltjens I."/>
            <person name="Voet M."/>
            <person name="Bastiaens I."/>
            <person name="Aert R."/>
            <person name="Defoor E."/>
            <person name="Weitzenegger T."/>
            <person name="Bothe G."/>
            <person name="Ramsperger U."/>
            <person name="Hilbert H."/>
            <person name="Braun M."/>
            <person name="Holzer E."/>
            <person name="Brandt A."/>
            <person name="Peters S."/>
            <person name="van Staveren M."/>
            <person name="Dirkse W."/>
            <person name="Mooijman P."/>
            <person name="Klein Lankhorst R."/>
            <person name="Rose M."/>
            <person name="Hauf J."/>
            <person name="Koetter P."/>
            <person name="Berneiser S."/>
            <person name="Hempel S."/>
            <person name="Feldpausch M."/>
            <person name="Lamberth S."/>
            <person name="Van den Daele H."/>
            <person name="De Keyser A."/>
            <person name="Buysshaert C."/>
            <person name="Gielen J."/>
            <person name="Villarroel R."/>
            <person name="De Clercq R."/>
            <person name="van Montagu M."/>
            <person name="Rogers J."/>
            <person name="Cronin A."/>
            <person name="Quail M.A."/>
            <person name="Bray-Allen S."/>
            <person name="Clark L."/>
            <person name="Doggett J."/>
            <person name="Hall S."/>
            <person name="Kay M."/>
            <person name="Lennard N."/>
            <person name="McLay K."/>
            <person name="Mayes R."/>
            <person name="Pettett A."/>
            <person name="Rajandream M.A."/>
            <person name="Lyne M."/>
            <person name="Benes V."/>
            <person name="Rechmann S."/>
            <person name="Borkova D."/>
            <person name="Bloecker H."/>
            <person name="Scharfe M."/>
            <person name="Grimm M."/>
            <person name="Loehnert T.-H."/>
            <person name="Dose S."/>
            <person name="de Haan M."/>
            <person name="Maarse A.C."/>
            <person name="Schaefer M."/>
            <person name="Mueller-Auer S."/>
            <person name="Gabel C."/>
            <person name="Fuchs M."/>
            <person name="Fartmann B."/>
            <person name="Granderath K."/>
            <person name="Dauner D."/>
            <person name="Herzl A."/>
            <person name="Neumann S."/>
            <person name="Argiriou A."/>
            <person name="Vitale D."/>
            <person name="Liguori R."/>
            <person name="Piravandi E."/>
            <person name="Massenet O."/>
            <person name="Quigley F."/>
            <person name="Clabauld G."/>
            <person name="Muendlein A."/>
            <person name="Felber R."/>
            <person name="Schnabl S."/>
            <person name="Hiller R."/>
            <person name="Schmidt W."/>
            <person name="Lecharny A."/>
            <person name="Aubourg S."/>
            <person name="Chefdor F."/>
            <person name="Cooke R."/>
            <person name="Berger C."/>
            <person name="Monfort A."/>
            <person name="Casacuberta E."/>
            <person name="Gibbons T."/>
            <person name="Weber N."/>
            <person name="Vandenbol M."/>
            <person name="Bargues M."/>
            <person name="Terol J."/>
            <person name="Torres A."/>
            <person name="Perez-Perez A."/>
            <person name="Purnelle B."/>
            <person name="Bent E."/>
            <person name="Johnson S."/>
            <person name="Tacon D."/>
            <person name="Jesse T."/>
            <person name="Heijnen L."/>
            <person name="Schwarz S."/>
            <person name="Scholler P."/>
            <person name="Heber S."/>
            <person name="Francs P."/>
            <person name="Bielke C."/>
            <person name="Frishman D."/>
            <person name="Haase D."/>
            <person name="Lemcke K."/>
            <person name="Mewes H.-W."/>
            <person name="Stocker S."/>
            <person name="Zaccaria P."/>
            <person name="Bevan M."/>
            <person name="Wilson R.K."/>
            <person name="de la Bastide M."/>
            <person name="Habermann K."/>
            <person name="Parnell L."/>
            <person name="Dedhia N."/>
            <person name="Gnoj L."/>
            <person name="Schutz K."/>
            <person name="Huang E."/>
            <person name="Spiegel L."/>
            <person name="Sekhon M."/>
            <person name="Murray J."/>
            <person name="Sheet P."/>
            <person name="Cordes M."/>
            <person name="Abu-Threideh J."/>
            <person name="Stoneking T."/>
            <person name="Kalicki J."/>
            <person name="Graves T."/>
            <person name="Harmon G."/>
            <person name="Edwards J."/>
            <person name="Latreille P."/>
            <person name="Courtney L."/>
            <person name="Cloud J."/>
            <person name="Abbott A."/>
            <person name="Scott K."/>
            <person name="Johnson D."/>
            <person name="Minx P."/>
            <person name="Bentley D."/>
            <person name="Fulton B."/>
            <person name="Miller N."/>
            <person name="Greco T."/>
            <person name="Kemp K."/>
            <person name="Kramer J."/>
            <person name="Fulton L."/>
            <person name="Mardis E."/>
            <person name="Dante M."/>
            <person name="Pepin K."/>
            <person name="Hillier L.W."/>
            <person name="Nelson J."/>
            <person name="Spieth J."/>
            <person name="Ryan E."/>
            <person name="Andrews S."/>
            <person name="Geisel C."/>
            <person name="Layman D."/>
            <person name="Du H."/>
            <person name="Ali J."/>
            <person name="Berghoff A."/>
            <person name="Jones K."/>
            <person name="Drone K."/>
            <person name="Cotton M."/>
            <person name="Joshu C."/>
            <person name="Antonoiu B."/>
            <person name="Zidanic M."/>
            <person name="Strong C."/>
            <person name="Sun H."/>
            <person name="Lamar B."/>
            <person name="Yordan C."/>
            <person name="Ma P."/>
            <person name="Zhong J."/>
            <person name="Preston R."/>
            <person name="Vil D."/>
            <person name="Shekher M."/>
            <person name="Matero A."/>
            <person name="Shah R."/>
            <person name="Swaby I.K."/>
            <person name="O'Shaughnessy A."/>
            <person name="Rodriguez M."/>
            <person name="Hoffman J."/>
            <person name="Till S."/>
            <person name="Granat S."/>
            <person name="Shohdy N."/>
            <person name="Hasegawa A."/>
            <person name="Hameed A."/>
            <person name="Lodhi M."/>
            <person name="Johnson A."/>
            <person name="Chen E."/>
            <person name="Marra M.A."/>
            <person name="Martienssen R."/>
            <person name="McCombie W.R."/>
        </authorList>
    </citation>
    <scope>NUCLEOTIDE SEQUENCE [LARGE SCALE GENOMIC DNA]</scope>
    <source>
        <strain>cv. Columbia</strain>
    </source>
</reference>
<reference key="2">
    <citation type="journal article" date="2017" name="Plant J.">
        <title>Araport11: a complete reannotation of the Arabidopsis thaliana reference genome.</title>
        <authorList>
            <person name="Cheng C.Y."/>
            <person name="Krishnakumar V."/>
            <person name="Chan A.P."/>
            <person name="Thibaud-Nissen F."/>
            <person name="Schobel S."/>
            <person name="Town C.D."/>
        </authorList>
    </citation>
    <scope>GENOME REANNOTATION</scope>
    <source>
        <strain>cv. Columbia</strain>
    </source>
</reference>
<reference evidence="3" key="3">
    <citation type="journal article" date="2001" name="Plant Mol. Biol.">
        <title>Two large Arabidopsis thaliana gene families are homologous to the Brassica gene superfamily that encodes pollen coat proteins and the male component of the self-incompatibility response.</title>
        <authorList>
            <person name="Vanoosthuyse V."/>
            <person name="Miege C."/>
            <person name="Dumas C."/>
            <person name="Cock J.M."/>
        </authorList>
    </citation>
    <scope>IDENTIFICATION</scope>
</reference>
<reference key="4">
    <citation type="journal article" date="2005" name="Plant Physiol.">
        <title>Genome organization of more than 300 defensin-like genes in Arabidopsis.</title>
        <authorList>
            <person name="Silverstein K.A.T."/>
            <person name="Graham M.A."/>
            <person name="Paape T.D."/>
            <person name="VandenBosch K.A."/>
        </authorList>
    </citation>
    <scope>GENE FAMILY</scope>
</reference>
<organism evidence="3">
    <name type="scientific">Arabidopsis thaliana</name>
    <name type="common">Mouse-ear cress</name>
    <dbReference type="NCBI Taxonomy" id="3702"/>
    <lineage>
        <taxon>Eukaryota</taxon>
        <taxon>Viridiplantae</taxon>
        <taxon>Streptophyta</taxon>
        <taxon>Embryophyta</taxon>
        <taxon>Tracheophyta</taxon>
        <taxon>Spermatophyta</taxon>
        <taxon>Magnoliopsida</taxon>
        <taxon>eudicotyledons</taxon>
        <taxon>Gunneridae</taxon>
        <taxon>Pentapetalae</taxon>
        <taxon>rosids</taxon>
        <taxon>malvids</taxon>
        <taxon>Brassicales</taxon>
        <taxon>Brassicaceae</taxon>
        <taxon>Camelineae</taxon>
        <taxon>Arabidopsis</taxon>
    </lineage>
</organism>